<reference key="1">
    <citation type="journal article" date="2008" name="Genome Res.">
        <title>Chlamydia trachomatis: genome sequence analysis of lymphogranuloma venereum isolates.</title>
        <authorList>
            <person name="Thomson N.R."/>
            <person name="Holden M.T.G."/>
            <person name="Carder C."/>
            <person name="Lennard N."/>
            <person name="Lockey S.J."/>
            <person name="Marsh P."/>
            <person name="Skipp P."/>
            <person name="O'Connor C.D."/>
            <person name="Goodhead I."/>
            <person name="Norbertzcak H."/>
            <person name="Harris B."/>
            <person name="Ormond D."/>
            <person name="Rance R."/>
            <person name="Quail M.A."/>
            <person name="Parkhill J."/>
            <person name="Stephens R.S."/>
            <person name="Clarke I.N."/>
        </authorList>
    </citation>
    <scope>NUCLEOTIDE SEQUENCE [LARGE SCALE GENOMIC DNA]</scope>
    <source>
        <strain>UCH-1/proctitis</strain>
    </source>
</reference>
<name>SYV_CHLTB</name>
<gene>
    <name evidence="1" type="primary">valS</name>
    <name type="ordered locus">CTLon_0550</name>
</gene>
<evidence type="ECO:0000255" key="1">
    <source>
        <dbReference type="HAMAP-Rule" id="MF_02004"/>
    </source>
</evidence>
<protein>
    <recommendedName>
        <fullName evidence="1">Valine--tRNA ligase</fullName>
        <ecNumber evidence="1">6.1.1.9</ecNumber>
    </recommendedName>
    <alternativeName>
        <fullName evidence="1">Valyl-tRNA synthetase</fullName>
        <shortName evidence="1">ValRS</shortName>
    </alternativeName>
</protein>
<sequence length="939" mass="107113">MNEDQFPKAYDPKSSETGVYSFWERSGMFVANASSEKPAYSIVMPPPNVTGILHMGHALVNTLQDTLIRYKRMQGFEVCWVPGTDHAGIATQTVVERHLKASLGKRRTDFSREEFLKHVWDWKEKSQNVILSQLRQLGCSCDWSRQRFTMDPGANRAVKKAFKILFDKGVIYRGYYLVNWDPILQTALADDEVEYEERDGWLYYIRYQVVNSEEFITVATTRPETLLGDTAIAVSPEDQRYSHLIGAKVVVPFVNREIPIIGDFSVDASFGTGAVKITPAHDKDDYKTGMNHQLPMINILTPTGEINENGGIFTGLSREVARENIITSLEALGLFVKKEAYSSRVGVSYRSGAIIEPYLSKQWFVSVDSFRDSLREFVNSEEIRIFPPEFVRNYLTWVNNLKDWCISRQLWWGHRIPVWHNKHDENVICFDGEGGPEEVMRDPESWYQDPDVLDTWFSSGLWPLTCFGWPDEDSLDLKKFYPTAVLVTGHDILFFWVTRMVLMCSAMVDTEPFSDVFLHGLIFGKSYREYDEKGEWFYVSGERKRDYDKGKALPKNVVAKWEKLSKSKGNVIDPIEMIEAYGADAVRLTLCSCANRGEQIDLDYRLFEEYKNFINKLWNGARFIFGHISELTSRDLEEGVNQDLLGLEDFYILDRFNELLDLIDGHYNCYSFDKIASLAYDFFKNDLCSTYLEIIKPTLFGKQGSDQQRATKRKLLATLLINILGVLHPIVPYITETLFQKLKATLGTVENGKGDSVTGHAVSMLRSEACMVAEYPKPIHVAFPQGLRESFGIAERLVYTIRNIRGEMQLDPREPLQAFVISSEKKELVDVCIPIMCALGGVKTVEQLAEAPKDSIFSLGVVEGIQVGVILPPEHLAKERVRLEKEKTRLEKSIDSVSKLLASEDFRTRANPSLVQAKKDSLRNSQRELQSILDKLASL</sequence>
<keyword id="KW-0030">Aminoacyl-tRNA synthetase</keyword>
<keyword id="KW-0067">ATP-binding</keyword>
<keyword id="KW-0175">Coiled coil</keyword>
<keyword id="KW-0963">Cytoplasm</keyword>
<keyword id="KW-0436">Ligase</keyword>
<keyword id="KW-0547">Nucleotide-binding</keyword>
<keyword id="KW-0648">Protein biosynthesis</keyword>
<feature type="chain" id="PRO_1000216264" description="Valine--tRNA ligase">
    <location>
        <begin position="1"/>
        <end position="939"/>
    </location>
</feature>
<feature type="coiled-coil region" evidence="1">
    <location>
        <begin position="874"/>
        <end position="939"/>
    </location>
</feature>
<feature type="short sequence motif" description="'HIGH' region">
    <location>
        <begin position="47"/>
        <end position="57"/>
    </location>
</feature>
<feature type="short sequence motif" description="'KMSKS' region">
    <location>
        <begin position="563"/>
        <end position="567"/>
    </location>
</feature>
<feature type="binding site" evidence="1">
    <location>
        <position position="566"/>
    </location>
    <ligand>
        <name>ATP</name>
        <dbReference type="ChEBI" id="CHEBI:30616"/>
    </ligand>
</feature>
<accession>B0BBT3</accession>
<organism>
    <name type="scientific">Chlamydia trachomatis serovar L2b (strain UCH-1/proctitis)</name>
    <dbReference type="NCBI Taxonomy" id="471473"/>
    <lineage>
        <taxon>Bacteria</taxon>
        <taxon>Pseudomonadati</taxon>
        <taxon>Chlamydiota</taxon>
        <taxon>Chlamydiia</taxon>
        <taxon>Chlamydiales</taxon>
        <taxon>Chlamydiaceae</taxon>
        <taxon>Chlamydia/Chlamydophila group</taxon>
        <taxon>Chlamydia</taxon>
    </lineage>
</organism>
<dbReference type="EC" id="6.1.1.9" evidence="1"/>
<dbReference type="EMBL" id="AM884177">
    <property type="protein sequence ID" value="CAP06948.1"/>
    <property type="molecule type" value="Genomic_DNA"/>
</dbReference>
<dbReference type="RefSeq" id="WP_012263637.1">
    <property type="nucleotide sequence ID" value="NC_010280.2"/>
</dbReference>
<dbReference type="SMR" id="B0BBT3"/>
<dbReference type="KEGG" id="ctl:CTLon_0550"/>
<dbReference type="HOGENOM" id="CLU_001493_0_2_0"/>
<dbReference type="Proteomes" id="UP001154401">
    <property type="component" value="Chromosome"/>
</dbReference>
<dbReference type="GO" id="GO:0005829">
    <property type="term" value="C:cytosol"/>
    <property type="evidence" value="ECO:0007669"/>
    <property type="project" value="TreeGrafter"/>
</dbReference>
<dbReference type="GO" id="GO:0002161">
    <property type="term" value="F:aminoacyl-tRNA deacylase activity"/>
    <property type="evidence" value="ECO:0007669"/>
    <property type="project" value="InterPro"/>
</dbReference>
<dbReference type="GO" id="GO:0005524">
    <property type="term" value="F:ATP binding"/>
    <property type="evidence" value="ECO:0007669"/>
    <property type="project" value="UniProtKB-UniRule"/>
</dbReference>
<dbReference type="GO" id="GO:0004832">
    <property type="term" value="F:valine-tRNA ligase activity"/>
    <property type="evidence" value="ECO:0007669"/>
    <property type="project" value="UniProtKB-UniRule"/>
</dbReference>
<dbReference type="GO" id="GO:0006438">
    <property type="term" value="P:valyl-tRNA aminoacylation"/>
    <property type="evidence" value="ECO:0007669"/>
    <property type="project" value="UniProtKB-UniRule"/>
</dbReference>
<dbReference type="CDD" id="cd07962">
    <property type="entry name" value="Anticodon_Ia_Val"/>
    <property type="match status" value="1"/>
</dbReference>
<dbReference type="CDD" id="cd00817">
    <property type="entry name" value="ValRS_core"/>
    <property type="match status" value="1"/>
</dbReference>
<dbReference type="FunFam" id="3.40.50.620:FF:000032">
    <property type="entry name" value="Valine--tRNA ligase"/>
    <property type="match status" value="1"/>
</dbReference>
<dbReference type="FunFam" id="3.40.50.620:FF:000306">
    <property type="entry name" value="Valine--tRNA ligase"/>
    <property type="match status" value="1"/>
</dbReference>
<dbReference type="FunFam" id="3.90.740.10:FF:000010">
    <property type="entry name" value="Valine--tRNA ligase"/>
    <property type="match status" value="1"/>
</dbReference>
<dbReference type="Gene3D" id="3.40.50.620">
    <property type="entry name" value="HUPs"/>
    <property type="match status" value="2"/>
</dbReference>
<dbReference type="Gene3D" id="1.10.730.10">
    <property type="entry name" value="Isoleucyl-tRNA Synthetase, Domain 1"/>
    <property type="match status" value="1"/>
</dbReference>
<dbReference type="Gene3D" id="1.10.287.380">
    <property type="entry name" value="Valyl-tRNA synthetase, C-terminal domain"/>
    <property type="match status" value="1"/>
</dbReference>
<dbReference type="Gene3D" id="3.90.740.10">
    <property type="entry name" value="Valyl/Leucyl/Isoleucyl-tRNA synthetase, editing domain"/>
    <property type="match status" value="1"/>
</dbReference>
<dbReference type="HAMAP" id="MF_02004">
    <property type="entry name" value="Val_tRNA_synth_type1"/>
    <property type="match status" value="1"/>
</dbReference>
<dbReference type="InterPro" id="IPR001412">
    <property type="entry name" value="aa-tRNA-synth_I_CS"/>
</dbReference>
<dbReference type="InterPro" id="IPR002300">
    <property type="entry name" value="aa-tRNA-synth_Ia"/>
</dbReference>
<dbReference type="InterPro" id="IPR033705">
    <property type="entry name" value="Anticodon_Ia_Val"/>
</dbReference>
<dbReference type="InterPro" id="IPR013155">
    <property type="entry name" value="M/V/L/I-tRNA-synth_anticd-bd"/>
</dbReference>
<dbReference type="InterPro" id="IPR014729">
    <property type="entry name" value="Rossmann-like_a/b/a_fold"/>
</dbReference>
<dbReference type="InterPro" id="IPR010978">
    <property type="entry name" value="tRNA-bd_arm"/>
</dbReference>
<dbReference type="InterPro" id="IPR009080">
    <property type="entry name" value="tRNAsynth_Ia_anticodon-bd"/>
</dbReference>
<dbReference type="InterPro" id="IPR037118">
    <property type="entry name" value="Val-tRNA_synth_C_sf"/>
</dbReference>
<dbReference type="InterPro" id="IPR019499">
    <property type="entry name" value="Val-tRNA_synth_tRNA-bd"/>
</dbReference>
<dbReference type="InterPro" id="IPR009008">
    <property type="entry name" value="Val/Leu/Ile-tRNA-synth_edit"/>
</dbReference>
<dbReference type="InterPro" id="IPR002303">
    <property type="entry name" value="Valyl-tRNA_ligase"/>
</dbReference>
<dbReference type="NCBIfam" id="NF004349">
    <property type="entry name" value="PRK05729.1"/>
    <property type="match status" value="1"/>
</dbReference>
<dbReference type="NCBIfam" id="TIGR00422">
    <property type="entry name" value="valS"/>
    <property type="match status" value="1"/>
</dbReference>
<dbReference type="PANTHER" id="PTHR11946:SF93">
    <property type="entry name" value="VALINE--TRNA LIGASE, CHLOROPLASTIC_MITOCHONDRIAL 2"/>
    <property type="match status" value="1"/>
</dbReference>
<dbReference type="PANTHER" id="PTHR11946">
    <property type="entry name" value="VALYL-TRNA SYNTHETASES"/>
    <property type="match status" value="1"/>
</dbReference>
<dbReference type="Pfam" id="PF08264">
    <property type="entry name" value="Anticodon_1"/>
    <property type="match status" value="1"/>
</dbReference>
<dbReference type="Pfam" id="PF00133">
    <property type="entry name" value="tRNA-synt_1"/>
    <property type="match status" value="2"/>
</dbReference>
<dbReference type="Pfam" id="PF10458">
    <property type="entry name" value="Val_tRNA-synt_C"/>
    <property type="match status" value="1"/>
</dbReference>
<dbReference type="PRINTS" id="PR00986">
    <property type="entry name" value="TRNASYNTHVAL"/>
</dbReference>
<dbReference type="SUPFAM" id="SSF47323">
    <property type="entry name" value="Anticodon-binding domain of a subclass of class I aminoacyl-tRNA synthetases"/>
    <property type="match status" value="1"/>
</dbReference>
<dbReference type="SUPFAM" id="SSF52374">
    <property type="entry name" value="Nucleotidylyl transferase"/>
    <property type="match status" value="1"/>
</dbReference>
<dbReference type="SUPFAM" id="SSF46589">
    <property type="entry name" value="tRNA-binding arm"/>
    <property type="match status" value="1"/>
</dbReference>
<dbReference type="SUPFAM" id="SSF50677">
    <property type="entry name" value="ValRS/IleRS/LeuRS editing domain"/>
    <property type="match status" value="1"/>
</dbReference>
<dbReference type="PROSITE" id="PS00178">
    <property type="entry name" value="AA_TRNA_LIGASE_I"/>
    <property type="match status" value="1"/>
</dbReference>
<proteinExistence type="inferred from homology"/>
<comment type="function">
    <text evidence="1">Catalyzes the attachment of valine to tRNA(Val). As ValRS can inadvertently accommodate and process structurally similar amino acids such as threonine, to avoid such errors, it has a 'posttransfer' editing activity that hydrolyzes mischarged Thr-tRNA(Val) in a tRNA-dependent manner.</text>
</comment>
<comment type="catalytic activity">
    <reaction evidence="1">
        <text>tRNA(Val) + L-valine + ATP = L-valyl-tRNA(Val) + AMP + diphosphate</text>
        <dbReference type="Rhea" id="RHEA:10704"/>
        <dbReference type="Rhea" id="RHEA-COMP:9672"/>
        <dbReference type="Rhea" id="RHEA-COMP:9708"/>
        <dbReference type="ChEBI" id="CHEBI:30616"/>
        <dbReference type="ChEBI" id="CHEBI:33019"/>
        <dbReference type="ChEBI" id="CHEBI:57762"/>
        <dbReference type="ChEBI" id="CHEBI:78442"/>
        <dbReference type="ChEBI" id="CHEBI:78537"/>
        <dbReference type="ChEBI" id="CHEBI:456215"/>
        <dbReference type="EC" id="6.1.1.9"/>
    </reaction>
</comment>
<comment type="subunit">
    <text evidence="1">Monomer.</text>
</comment>
<comment type="subcellular location">
    <subcellularLocation>
        <location evidence="1">Cytoplasm</location>
    </subcellularLocation>
</comment>
<comment type="domain">
    <text evidence="1">ValRS has two distinct active sites: one for aminoacylation and one for editing. The misactivated threonine is translocated from the active site to the editing site.</text>
</comment>
<comment type="domain">
    <text evidence="1">The C-terminal coiled-coil domain is crucial for aminoacylation activity.</text>
</comment>
<comment type="similarity">
    <text evidence="1">Belongs to the class-I aminoacyl-tRNA synthetase family. ValS type 1 subfamily.</text>
</comment>